<protein>
    <recommendedName>
        <fullName>Cytochrome c oxidase subunit 7A1, mitochondrial</fullName>
    </recommendedName>
    <alternativeName>
        <fullName>Cytochrome c oxidase subunit VIIa-heart</fullName>
        <shortName>Cytochrome c oxidase subunit VIIa-H</shortName>
    </alternativeName>
</protein>
<reference key="1">
    <citation type="journal article" date="2005" name="Proc. Natl. Acad. Sci. U.S.A.">
        <title>Rapid electrostatic evolution at the binding site for cytochrome c on cytochrome c oxidase in anthropoid primates.</title>
        <authorList>
            <person name="Schmidt T.R."/>
            <person name="Wildman D.E."/>
            <person name="Uddin M."/>
            <person name="Opazo J.C."/>
            <person name="Goodman M."/>
            <person name="Grossman L.I."/>
        </authorList>
    </citation>
    <scope>NUCLEOTIDE SEQUENCE [MRNA]</scope>
</reference>
<proteinExistence type="inferred from homology"/>
<evidence type="ECO:0000250" key="1">
    <source>
        <dbReference type="UniProtKB" id="P07470"/>
    </source>
</evidence>
<evidence type="ECO:0000250" key="2">
    <source>
        <dbReference type="UniProtKB" id="P10174"/>
    </source>
</evidence>
<evidence type="ECO:0000250" key="3">
    <source>
        <dbReference type="UniProtKB" id="P56392"/>
    </source>
</evidence>
<evidence type="ECO:0000250" key="4">
    <source>
        <dbReference type="UniProtKB" id="Q08CE7"/>
    </source>
</evidence>
<evidence type="ECO:0000305" key="5"/>
<accession>Q53CF6</accession>
<feature type="transit peptide" description="Mitochondrion" evidence="1">
    <location>
        <begin position="1"/>
        <end position="21"/>
    </location>
</feature>
<feature type="chain" id="PRO_0000253614" description="Cytochrome c oxidase subunit 7A1, mitochondrial">
    <location>
        <begin position="22"/>
        <end position="80"/>
    </location>
</feature>
<feature type="topological domain" description="Mitochondrial matrix" evidence="1">
    <location>
        <begin position="22"/>
        <end position="46"/>
    </location>
</feature>
<feature type="transmembrane region" description="Helical" evidence="1">
    <location>
        <begin position="47"/>
        <end position="75"/>
    </location>
</feature>
<feature type="topological domain" description="Mitochondrial intermembrane" evidence="1">
    <location>
        <begin position="76"/>
        <end position="80"/>
    </location>
</feature>
<name>CX7A1_SAISC</name>
<sequence length="80" mass="8973">MLAPRVSQALIRSFSSTARNRLKNRVPEKQKLFQEDNGIPVYLKGGVVDHILYRVTMGLCLGGTAYGVYCLAWASFPRNK</sequence>
<gene>
    <name type="primary">COX7A1</name>
    <name type="synonym">COX7AH</name>
</gene>
<dbReference type="EMBL" id="AY585863">
    <property type="protein sequence ID" value="AAW03191.1"/>
    <property type="molecule type" value="mRNA"/>
</dbReference>
<dbReference type="SMR" id="Q53CF6"/>
<dbReference type="UniPathway" id="UPA00705"/>
<dbReference type="GO" id="GO:0005743">
    <property type="term" value="C:mitochondrial inner membrane"/>
    <property type="evidence" value="ECO:0007669"/>
    <property type="project" value="UniProtKB-SubCell"/>
</dbReference>
<dbReference type="GO" id="GO:0045277">
    <property type="term" value="C:respiratory chain complex IV"/>
    <property type="evidence" value="ECO:0007669"/>
    <property type="project" value="InterPro"/>
</dbReference>
<dbReference type="GO" id="GO:0016491">
    <property type="term" value="F:oxidoreductase activity"/>
    <property type="evidence" value="ECO:0007669"/>
    <property type="project" value="UniProtKB-KW"/>
</dbReference>
<dbReference type="GO" id="GO:0006123">
    <property type="term" value="P:mitochondrial electron transport, cytochrome c to oxygen"/>
    <property type="evidence" value="ECO:0007669"/>
    <property type="project" value="InterPro"/>
</dbReference>
<dbReference type="GO" id="GO:0097250">
    <property type="term" value="P:mitochondrial respirasome assembly"/>
    <property type="evidence" value="ECO:0000250"/>
    <property type="project" value="UniProtKB"/>
</dbReference>
<dbReference type="GO" id="GO:0002082">
    <property type="term" value="P:regulation of oxidative phosphorylation"/>
    <property type="evidence" value="ECO:0007669"/>
    <property type="project" value="TreeGrafter"/>
</dbReference>
<dbReference type="CDD" id="cd00928">
    <property type="entry name" value="Cyt_c_Oxidase_VIIa"/>
    <property type="match status" value="1"/>
</dbReference>
<dbReference type="FunFam" id="4.10.91.10:FF:000001">
    <property type="entry name" value="Cytochrome c oxidase subunit 7A1, mitochondrial"/>
    <property type="match status" value="1"/>
</dbReference>
<dbReference type="Gene3D" id="4.10.91.10">
    <property type="entry name" value="Cytochrome c oxidase, subunit VIIa"/>
    <property type="match status" value="1"/>
</dbReference>
<dbReference type="InterPro" id="IPR039297">
    <property type="entry name" value="COX7a"/>
</dbReference>
<dbReference type="InterPro" id="IPR036539">
    <property type="entry name" value="Cyt_c_oxidase_su7a_sf"/>
</dbReference>
<dbReference type="InterPro" id="IPR003177">
    <property type="entry name" value="Cytc_oxidase_su7a_met"/>
</dbReference>
<dbReference type="PANTHER" id="PTHR10510">
    <property type="entry name" value="CYTOCHROME C OXIDASE POLYPEPTIDE 7A"/>
    <property type="match status" value="1"/>
</dbReference>
<dbReference type="PANTHER" id="PTHR10510:SF5">
    <property type="entry name" value="CYTOCHROME C OXIDASE SUBUNIT 7A1, MITOCHONDRIAL"/>
    <property type="match status" value="1"/>
</dbReference>
<dbReference type="Pfam" id="PF02238">
    <property type="entry name" value="COX7a"/>
    <property type="match status" value="1"/>
</dbReference>
<dbReference type="SUPFAM" id="SSF81419">
    <property type="entry name" value="Mitochondrial cytochrome c oxidase subunit VIIa"/>
    <property type="match status" value="1"/>
</dbReference>
<comment type="function">
    <text evidence="2 3 4">Component of the mitochondrial respiratory complex IV (CIV, also named cytochrome c oxidase complex), the last enzyme in the mitochondrial electron transport chain which drives oxidative phosphorylation (By similarity). The CIV complex is the component of the respiratory chain that catalyzes the reduction of oxygen to water (By similarity). Acts as an assembly factor that specifically drives the homodimerization of CIV complexes, mediating the formation of mitochondrial respiratory supercomplexes (respirasomes) containing two CIV: supercomplxes with two molecules of CIV show improved activity (By similarity). Despite being highly expressed in brown adipose tissue, not required for thermogenesis (By similarity).</text>
</comment>
<comment type="pathway">
    <text evidence="3">Energy metabolism; oxidative phosphorylation.</text>
</comment>
<comment type="subunit">
    <text evidence="1">Component of the complex IV (CIV, cytochrome c oxidase), a multisubunit enzyme composed of 14 subunits. The complex is composed of a catalytic core of 3 subunits MT-CO1, MT-CO2 and MT-CO3, encoded in the mitochondrial DNA, and 11 supernumerary subunits COX4I1 (or COX4I2), COX5A, COX5B, COX6A2 (or COX6A1), COX6B1 (or COX6B2), COX6C, COX7A1 (or COX7A2), COX7B, COX7C, COX8B and NDUFA4, which are encoded in the nuclear genome. The complex exists as a monomer or a dimer and forms supercomplexes (SCs) in the inner mitochondrial membrane with NADH-ubiquinone oxidoreductase (complex I, CI) and ubiquinol-cytochrome c oxidoreductase (cytochrome b-c1 complex, complex III, CIII), resulting in different assemblies (supercomplex SCI(1)III(2)IV(1) and megacomplex MCI(2)III(2)IV(2)).</text>
</comment>
<comment type="subcellular location">
    <subcellularLocation>
        <location evidence="1">Mitochondrion inner membrane</location>
        <topology evidence="1">Single-pass membrane protein</topology>
    </subcellularLocation>
</comment>
<comment type="similarity">
    <text evidence="5">Belongs to the cytochrome c oxidase VIIa family.</text>
</comment>
<keyword id="KW-0472">Membrane</keyword>
<keyword id="KW-0496">Mitochondrion</keyword>
<keyword id="KW-0999">Mitochondrion inner membrane</keyword>
<keyword id="KW-0560">Oxidoreductase</keyword>
<keyword id="KW-0809">Transit peptide</keyword>
<keyword id="KW-0812">Transmembrane</keyword>
<keyword id="KW-1133">Transmembrane helix</keyword>
<organism>
    <name type="scientific">Saimiri sciureus</name>
    <name type="common">Common squirrel monkey</name>
    <dbReference type="NCBI Taxonomy" id="9521"/>
    <lineage>
        <taxon>Eukaryota</taxon>
        <taxon>Metazoa</taxon>
        <taxon>Chordata</taxon>
        <taxon>Craniata</taxon>
        <taxon>Vertebrata</taxon>
        <taxon>Euteleostomi</taxon>
        <taxon>Mammalia</taxon>
        <taxon>Eutheria</taxon>
        <taxon>Euarchontoglires</taxon>
        <taxon>Primates</taxon>
        <taxon>Haplorrhini</taxon>
        <taxon>Platyrrhini</taxon>
        <taxon>Cebidae</taxon>
        <taxon>Saimiriinae</taxon>
        <taxon>Saimiri</taxon>
    </lineage>
</organism>